<comment type="function">
    <text>Can release basic, acidic, aromatic, and, to a lesser extent, aliphatic amino acids.</text>
</comment>
<comment type="cofactor">
    <cofactor>
        <name>Zn(2+)</name>
        <dbReference type="ChEBI" id="CHEBI:29105"/>
    </cofactor>
</comment>
<comment type="subunit">
    <text>Homotetramer.</text>
</comment>
<comment type="similarity">
    <text evidence="2">Belongs to the peptidase M20 family.</text>
</comment>
<sequence>MDLVEKLKNDVREIEDWIIQIRRKIHEYPELSYKEYNTSKLVAETLRKLGVEVEEGVGLPTAVVGKIRGSKPGKTVALRADMDALPVEENTDLEFKSKVKGVMHACGHDTHVAMLLGGAYLLVKNKDLISGEIRLIFQPAEEDGGLGGAKPMIEAGVMNGVDYVFGIHISSSYPSGVFATRKGPIMATPDAFKIIVHGKGGHGSAPHETIDPIFISLQIANAIYGITARQIDPVQPFIISITTIHSGTKDNIIPDDAEMQGTIRSLDENVRSKAKDYMRRIVSSICGIYGATCEVKFMEDVYPTTVNNPEVTDEVMKILSSISTVVETEPVLGAEDFSRFLQKAPGTYFFLGTRNEKKGCIYPNHSSKFCVDEDVLKLGALAHALLAVKFSNK</sequence>
<name>CBPX1_SACS2</name>
<feature type="chain" id="PRO_0000061947" description="Thermostable carboxypeptidase 1">
    <location>
        <begin position="1"/>
        <end position="393"/>
    </location>
</feature>
<feature type="active site" description="Proton donor" evidence="1">
    <location>
        <position position="302"/>
    </location>
</feature>
<feature type="active site" description="Nucleophile" evidence="1">
    <location>
        <position position="373"/>
    </location>
</feature>
<feature type="binding site" evidence="1">
    <location>
        <position position="104"/>
    </location>
    <ligand>
        <name>Zn(2+)</name>
        <dbReference type="ChEBI" id="CHEBI:29105"/>
    </ligand>
</feature>
<feature type="binding site" evidence="1">
    <location>
        <position position="109"/>
    </location>
    <ligand>
        <name>Zn(2+)</name>
        <dbReference type="ChEBI" id="CHEBI:29105"/>
    </ligand>
</feature>
<feature type="binding site" evidence="1">
    <location>
        <position position="245"/>
    </location>
    <ligand>
        <name>Zn(2+)</name>
        <dbReference type="ChEBI" id="CHEBI:29105"/>
    </ligand>
</feature>
<feature type="sequence conflict" description="In Ref. 3; AA sequence." evidence="2" ref="3">
    <original>R</original>
    <variation>K</variation>
    <location>
        <position position="12"/>
    </location>
</feature>
<feature type="sequence conflict" description="In Ref. 3; AA sequence." evidence="2" ref="3">
    <original>W</original>
    <variation>R</variation>
    <location>
        <position position="17"/>
    </location>
</feature>
<feature type="sequence conflict" description="In Ref. 3; AA sequence." evidence="2" ref="3">
    <original>Y</original>
    <variation>N</variation>
    <location>
        <position position="28"/>
    </location>
</feature>
<feature type="sequence conflict" description="In Ref. 3; AA sequence." evidence="2" ref="3">
    <original>E</original>
    <variation>P</variation>
    <location>
        <position position="30"/>
    </location>
</feature>
<proteinExistence type="evidence at protein level"/>
<protein>
    <recommendedName>
        <fullName>Thermostable carboxypeptidase 1</fullName>
        <ecNumber>3.4.17.-</ecNumber>
    </recommendedName>
</protein>
<dbReference type="EC" id="3.4.17.-"/>
<dbReference type="EMBL" id="Z48497">
    <property type="protein sequence ID" value="CAA88397.1"/>
    <property type="molecule type" value="Genomic_DNA"/>
</dbReference>
<dbReference type="EMBL" id="AE006641">
    <property type="protein sequence ID" value="AAK41591.1"/>
    <property type="molecule type" value="Genomic_DNA"/>
</dbReference>
<dbReference type="PIR" id="H90291">
    <property type="entry name" value="H90291"/>
</dbReference>
<dbReference type="PIR" id="S23180">
    <property type="entry name" value="S23180"/>
</dbReference>
<dbReference type="RefSeq" id="WP_010923348.1">
    <property type="nucleotide sequence ID" value="NC_002754.1"/>
</dbReference>
<dbReference type="SMR" id="P80092"/>
<dbReference type="FunCoup" id="P80092">
    <property type="interactions" value="13"/>
</dbReference>
<dbReference type="STRING" id="273057.SSO1355"/>
<dbReference type="MEROPS" id="M20.008"/>
<dbReference type="PaxDb" id="273057-SSO1355"/>
<dbReference type="EnsemblBacteria" id="AAK41591">
    <property type="protein sequence ID" value="AAK41591"/>
    <property type="gene ID" value="SSO1355"/>
</dbReference>
<dbReference type="GeneID" id="1454370"/>
<dbReference type="GeneID" id="27427725"/>
<dbReference type="KEGG" id="sso:SSO1355"/>
<dbReference type="PATRIC" id="fig|273057.12.peg.1361"/>
<dbReference type="eggNOG" id="arCOG01108">
    <property type="taxonomic scope" value="Archaea"/>
</dbReference>
<dbReference type="HOGENOM" id="CLU_023257_0_1_2"/>
<dbReference type="InParanoid" id="P80092"/>
<dbReference type="PhylomeDB" id="P80092"/>
<dbReference type="BRENDA" id="3.4.17.B1">
    <property type="organism ID" value="6163"/>
</dbReference>
<dbReference type="Proteomes" id="UP000001974">
    <property type="component" value="Chromosome"/>
</dbReference>
<dbReference type="GO" id="GO:0004180">
    <property type="term" value="F:carboxypeptidase activity"/>
    <property type="evidence" value="ECO:0007669"/>
    <property type="project" value="UniProtKB-KW"/>
</dbReference>
<dbReference type="GO" id="GO:0016787">
    <property type="term" value="F:hydrolase activity"/>
    <property type="evidence" value="ECO:0000318"/>
    <property type="project" value="GO_Central"/>
</dbReference>
<dbReference type="GO" id="GO:0046872">
    <property type="term" value="F:metal ion binding"/>
    <property type="evidence" value="ECO:0007669"/>
    <property type="project" value="UniProtKB-KW"/>
</dbReference>
<dbReference type="GO" id="GO:0008237">
    <property type="term" value="F:metallopeptidase activity"/>
    <property type="evidence" value="ECO:0007669"/>
    <property type="project" value="UniProtKB-KW"/>
</dbReference>
<dbReference type="GO" id="GO:0006508">
    <property type="term" value="P:proteolysis"/>
    <property type="evidence" value="ECO:0007669"/>
    <property type="project" value="UniProtKB-KW"/>
</dbReference>
<dbReference type="CDD" id="cd08021">
    <property type="entry name" value="M20_Acy1_YhaA-like"/>
    <property type="match status" value="1"/>
</dbReference>
<dbReference type="FunFam" id="3.30.70.360:FF:000014">
    <property type="entry name" value="N-acyl-L-amino acid amidohydrolase"/>
    <property type="match status" value="1"/>
</dbReference>
<dbReference type="Gene3D" id="3.30.70.360">
    <property type="match status" value="1"/>
</dbReference>
<dbReference type="Gene3D" id="3.40.630.10">
    <property type="entry name" value="Zn peptidases"/>
    <property type="match status" value="1"/>
</dbReference>
<dbReference type="InterPro" id="IPR017439">
    <property type="entry name" value="Amidohydrolase"/>
</dbReference>
<dbReference type="InterPro" id="IPR036264">
    <property type="entry name" value="Bact_exopeptidase_dim_dom"/>
</dbReference>
<dbReference type="InterPro" id="IPR002933">
    <property type="entry name" value="Peptidase_M20"/>
</dbReference>
<dbReference type="InterPro" id="IPR011650">
    <property type="entry name" value="Peptidase_M20_dimer"/>
</dbReference>
<dbReference type="InterPro" id="IPR053493">
    <property type="entry name" value="Thermostable_CP"/>
</dbReference>
<dbReference type="NCBIfam" id="TIGR01891">
    <property type="entry name" value="amidohydrolases"/>
    <property type="match status" value="1"/>
</dbReference>
<dbReference type="NCBIfam" id="NF040868">
    <property type="entry name" value="carboxypep_CpsA"/>
    <property type="match status" value="1"/>
</dbReference>
<dbReference type="PANTHER" id="PTHR11014:SF63">
    <property type="entry name" value="METALLOPEPTIDASE, PUTATIVE (AFU_ORTHOLOGUE AFUA_6G09600)-RELATED"/>
    <property type="match status" value="1"/>
</dbReference>
<dbReference type="PANTHER" id="PTHR11014">
    <property type="entry name" value="PEPTIDASE M20 FAMILY MEMBER"/>
    <property type="match status" value="1"/>
</dbReference>
<dbReference type="Pfam" id="PF07687">
    <property type="entry name" value="M20_dimer"/>
    <property type="match status" value="1"/>
</dbReference>
<dbReference type="Pfam" id="PF01546">
    <property type="entry name" value="Peptidase_M20"/>
    <property type="match status" value="1"/>
</dbReference>
<dbReference type="PIRSF" id="PIRSF005962">
    <property type="entry name" value="Pept_M20D_amidohydro"/>
    <property type="match status" value="1"/>
</dbReference>
<dbReference type="SUPFAM" id="SSF55031">
    <property type="entry name" value="Bacterial exopeptidase dimerisation domain"/>
    <property type="match status" value="1"/>
</dbReference>
<dbReference type="SUPFAM" id="SSF53187">
    <property type="entry name" value="Zn-dependent exopeptidases"/>
    <property type="match status" value="1"/>
</dbReference>
<evidence type="ECO:0000255" key="1"/>
<evidence type="ECO:0000305" key="2"/>
<reference key="1">
    <citation type="journal article" date="1995" name="J. Bacteriol.">
        <title>Molecular cloning, nucleotide sequence, and expression of a carboxypeptidase-encoding gene from the archaebacterium Sulfolobus solfataricus.</title>
        <authorList>
            <person name="Colombo S."/>
            <person name="Toietta G."/>
            <person name="Zecca L."/>
            <person name="Vanoni M."/>
            <person name="Tortora P."/>
        </authorList>
    </citation>
    <scope>NUCLEOTIDE SEQUENCE [GENOMIC DNA]</scope>
    <source>
        <strain>DSM 5833 / MT-4</strain>
    </source>
</reference>
<reference key="2">
    <citation type="journal article" date="2001" name="Proc. Natl. Acad. Sci. U.S.A.">
        <title>The complete genome of the crenarchaeon Sulfolobus solfataricus P2.</title>
        <authorList>
            <person name="She Q."/>
            <person name="Singh R.K."/>
            <person name="Confalonieri F."/>
            <person name="Zivanovic Y."/>
            <person name="Allard G."/>
            <person name="Awayez M.J."/>
            <person name="Chan-Weiher C.C.-Y."/>
            <person name="Clausen I.G."/>
            <person name="Curtis B.A."/>
            <person name="De Moors A."/>
            <person name="Erauso G."/>
            <person name="Fletcher C."/>
            <person name="Gordon P.M.K."/>
            <person name="Heikamp-de Jong I."/>
            <person name="Jeffries A.C."/>
            <person name="Kozera C.J."/>
            <person name="Medina N."/>
            <person name="Peng X."/>
            <person name="Thi-Ngoc H.P."/>
            <person name="Redder P."/>
            <person name="Schenk M.E."/>
            <person name="Theriault C."/>
            <person name="Tolstrup N."/>
            <person name="Charlebois R.L."/>
            <person name="Doolittle W.F."/>
            <person name="Duguet M."/>
            <person name="Gaasterland T."/>
            <person name="Garrett R.A."/>
            <person name="Ragan M.A."/>
            <person name="Sensen C.W."/>
            <person name="Van der Oost J."/>
        </authorList>
    </citation>
    <scope>NUCLEOTIDE SEQUENCE [LARGE SCALE GENOMIC DNA]</scope>
    <source>
        <strain>ATCC 35092 / DSM 1617 / JCM 11322 / P2</strain>
    </source>
</reference>
<reference key="3">
    <citation type="journal article" date="1992" name="Eur. J. Biochem.">
        <title>Purification and characterization of a thermostable carboxypeptidase from the extreme thermophilic archaebacterium Sulfolobus solfataricus.</title>
        <authorList>
            <person name="Colombo S."/>
            <person name="D'Auria S."/>
            <person name="Fusi P."/>
            <person name="Zecca L."/>
            <person name="Raia C.A."/>
            <person name="Tortora P."/>
        </authorList>
    </citation>
    <scope>PROTEIN SEQUENCE OF 1-31</scope>
    <source>
        <strain>DSM 5833 / MT-4</strain>
    </source>
</reference>
<organism>
    <name type="scientific">Saccharolobus solfataricus (strain ATCC 35092 / DSM 1617 / JCM 11322 / P2)</name>
    <name type="common">Sulfolobus solfataricus</name>
    <dbReference type="NCBI Taxonomy" id="273057"/>
    <lineage>
        <taxon>Archaea</taxon>
        <taxon>Thermoproteota</taxon>
        <taxon>Thermoprotei</taxon>
        <taxon>Sulfolobales</taxon>
        <taxon>Sulfolobaceae</taxon>
        <taxon>Saccharolobus</taxon>
    </lineage>
</organism>
<accession>P80092</accession>
<gene>
    <name type="primary">cpsA1</name>
    <name type="synonym">cpsA</name>
    <name type="synonym">cpsA-1</name>
    <name type="ordered locus">SSO1355</name>
</gene>
<keyword id="KW-0121">Carboxypeptidase</keyword>
<keyword id="KW-0903">Direct protein sequencing</keyword>
<keyword id="KW-0378">Hydrolase</keyword>
<keyword id="KW-0479">Metal-binding</keyword>
<keyword id="KW-0482">Metalloprotease</keyword>
<keyword id="KW-0645">Protease</keyword>
<keyword id="KW-1185">Reference proteome</keyword>
<keyword id="KW-0862">Zinc</keyword>